<dbReference type="EC" id="2.1.2.9" evidence="1"/>
<dbReference type="EMBL" id="CP000686">
    <property type="protein sequence ID" value="ABQ92273.1"/>
    <property type="molecule type" value="Genomic_DNA"/>
</dbReference>
<dbReference type="SMR" id="A5V070"/>
<dbReference type="STRING" id="357808.RoseRS_3920"/>
<dbReference type="KEGG" id="rrs:RoseRS_3920"/>
<dbReference type="eggNOG" id="COG0223">
    <property type="taxonomic scope" value="Bacteria"/>
</dbReference>
<dbReference type="HOGENOM" id="CLU_033347_2_0_0"/>
<dbReference type="OrthoDB" id="9802815at2"/>
<dbReference type="Proteomes" id="UP000006554">
    <property type="component" value="Chromosome"/>
</dbReference>
<dbReference type="GO" id="GO:0005829">
    <property type="term" value="C:cytosol"/>
    <property type="evidence" value="ECO:0007669"/>
    <property type="project" value="TreeGrafter"/>
</dbReference>
<dbReference type="GO" id="GO:0004479">
    <property type="term" value="F:methionyl-tRNA formyltransferase activity"/>
    <property type="evidence" value="ECO:0007669"/>
    <property type="project" value="UniProtKB-UniRule"/>
</dbReference>
<dbReference type="CDD" id="cd08646">
    <property type="entry name" value="FMT_core_Met-tRNA-FMT_N"/>
    <property type="match status" value="1"/>
</dbReference>
<dbReference type="CDD" id="cd08704">
    <property type="entry name" value="Met_tRNA_FMT_C"/>
    <property type="match status" value="1"/>
</dbReference>
<dbReference type="Gene3D" id="3.10.25.10">
    <property type="entry name" value="Formyl transferase, C-terminal domain"/>
    <property type="match status" value="1"/>
</dbReference>
<dbReference type="Gene3D" id="3.40.50.170">
    <property type="entry name" value="Formyl transferase, N-terminal domain"/>
    <property type="match status" value="1"/>
</dbReference>
<dbReference type="HAMAP" id="MF_00182">
    <property type="entry name" value="Formyl_trans"/>
    <property type="match status" value="1"/>
</dbReference>
<dbReference type="InterPro" id="IPR005794">
    <property type="entry name" value="Fmt"/>
</dbReference>
<dbReference type="InterPro" id="IPR005793">
    <property type="entry name" value="Formyl_trans_C"/>
</dbReference>
<dbReference type="InterPro" id="IPR037022">
    <property type="entry name" value="Formyl_trans_C_sf"/>
</dbReference>
<dbReference type="InterPro" id="IPR002376">
    <property type="entry name" value="Formyl_transf_N"/>
</dbReference>
<dbReference type="InterPro" id="IPR036477">
    <property type="entry name" value="Formyl_transf_N_sf"/>
</dbReference>
<dbReference type="InterPro" id="IPR011034">
    <property type="entry name" value="Formyl_transferase-like_C_sf"/>
</dbReference>
<dbReference type="InterPro" id="IPR044135">
    <property type="entry name" value="Met-tRNA-FMT_C"/>
</dbReference>
<dbReference type="InterPro" id="IPR041711">
    <property type="entry name" value="Met-tRNA-FMT_N"/>
</dbReference>
<dbReference type="NCBIfam" id="TIGR00460">
    <property type="entry name" value="fmt"/>
    <property type="match status" value="1"/>
</dbReference>
<dbReference type="PANTHER" id="PTHR11138">
    <property type="entry name" value="METHIONYL-TRNA FORMYLTRANSFERASE"/>
    <property type="match status" value="1"/>
</dbReference>
<dbReference type="PANTHER" id="PTHR11138:SF5">
    <property type="entry name" value="METHIONYL-TRNA FORMYLTRANSFERASE, MITOCHONDRIAL"/>
    <property type="match status" value="1"/>
</dbReference>
<dbReference type="Pfam" id="PF02911">
    <property type="entry name" value="Formyl_trans_C"/>
    <property type="match status" value="1"/>
</dbReference>
<dbReference type="Pfam" id="PF00551">
    <property type="entry name" value="Formyl_trans_N"/>
    <property type="match status" value="1"/>
</dbReference>
<dbReference type="SUPFAM" id="SSF50486">
    <property type="entry name" value="FMT C-terminal domain-like"/>
    <property type="match status" value="1"/>
</dbReference>
<dbReference type="SUPFAM" id="SSF53328">
    <property type="entry name" value="Formyltransferase"/>
    <property type="match status" value="1"/>
</dbReference>
<feature type="chain" id="PRO_1000020148" description="Methionyl-tRNA formyltransferase">
    <location>
        <begin position="1"/>
        <end position="325"/>
    </location>
</feature>
<feature type="binding site" evidence="1">
    <location>
        <begin position="112"/>
        <end position="115"/>
    </location>
    <ligand>
        <name>(6S)-5,6,7,8-tetrahydrofolate</name>
        <dbReference type="ChEBI" id="CHEBI:57453"/>
    </ligand>
</feature>
<sequence length="325" mass="34227">MPLRIVFLGSPAFAVAPLERLVADARYQVVGVVTQPDRPAGRGRASVATPVKQAALRLGVPVLTPETLRDPAAVAELAALRPDVGVVAAYGEILRRDVLAIPPLGYVNIHPSLLPLYRGPSPVAGAILNGDAETGVTIMLIDAKMDSGPILAQRTVPLPPDARTGPLTQELFTIGADVLVETLDAYARGAITPQPQDHARATFTKLLTRDDGIIDWTQPAVRIERMTRAYDPWPGATTMWRGAPLKIIAARVIADRCADVPPGTLIDTADGPAVATGNGLLALITVQPAGKRPLPAADWRRGLRLSGGERLGDASARLSGGEAVH</sequence>
<organism>
    <name type="scientific">Roseiflexus sp. (strain RS-1)</name>
    <dbReference type="NCBI Taxonomy" id="357808"/>
    <lineage>
        <taxon>Bacteria</taxon>
        <taxon>Bacillati</taxon>
        <taxon>Chloroflexota</taxon>
        <taxon>Chloroflexia</taxon>
        <taxon>Chloroflexales</taxon>
        <taxon>Roseiflexineae</taxon>
        <taxon>Roseiflexaceae</taxon>
        <taxon>Roseiflexus</taxon>
    </lineage>
</organism>
<protein>
    <recommendedName>
        <fullName evidence="1">Methionyl-tRNA formyltransferase</fullName>
        <ecNumber evidence="1">2.1.2.9</ecNumber>
    </recommendedName>
</protein>
<comment type="function">
    <text evidence="1">Attaches a formyl group to the free amino group of methionyl-tRNA(fMet). The formyl group appears to play a dual role in the initiator identity of N-formylmethionyl-tRNA by promoting its recognition by IF2 and preventing the misappropriation of this tRNA by the elongation apparatus.</text>
</comment>
<comment type="catalytic activity">
    <reaction evidence="1">
        <text>L-methionyl-tRNA(fMet) + (6R)-10-formyltetrahydrofolate = N-formyl-L-methionyl-tRNA(fMet) + (6S)-5,6,7,8-tetrahydrofolate + H(+)</text>
        <dbReference type="Rhea" id="RHEA:24380"/>
        <dbReference type="Rhea" id="RHEA-COMP:9952"/>
        <dbReference type="Rhea" id="RHEA-COMP:9953"/>
        <dbReference type="ChEBI" id="CHEBI:15378"/>
        <dbReference type="ChEBI" id="CHEBI:57453"/>
        <dbReference type="ChEBI" id="CHEBI:78530"/>
        <dbReference type="ChEBI" id="CHEBI:78844"/>
        <dbReference type="ChEBI" id="CHEBI:195366"/>
        <dbReference type="EC" id="2.1.2.9"/>
    </reaction>
</comment>
<comment type="similarity">
    <text evidence="1">Belongs to the Fmt family.</text>
</comment>
<evidence type="ECO:0000255" key="1">
    <source>
        <dbReference type="HAMAP-Rule" id="MF_00182"/>
    </source>
</evidence>
<reference key="1">
    <citation type="submission" date="2007-04" db="EMBL/GenBank/DDBJ databases">
        <title>Complete sequence of Roseiflexus sp. RS-1.</title>
        <authorList>
            <consortium name="US DOE Joint Genome Institute"/>
            <person name="Copeland A."/>
            <person name="Lucas S."/>
            <person name="Lapidus A."/>
            <person name="Barry K."/>
            <person name="Detter J.C."/>
            <person name="Glavina del Rio T."/>
            <person name="Hammon N."/>
            <person name="Israni S."/>
            <person name="Dalin E."/>
            <person name="Tice H."/>
            <person name="Pitluck S."/>
            <person name="Chertkov O."/>
            <person name="Brettin T."/>
            <person name="Bruce D."/>
            <person name="Han C."/>
            <person name="Schmutz J."/>
            <person name="Larimer F."/>
            <person name="Land M."/>
            <person name="Hauser L."/>
            <person name="Kyrpides N."/>
            <person name="Mikhailova N."/>
            <person name="Bryant D.A."/>
            <person name="Richardson P."/>
        </authorList>
    </citation>
    <scope>NUCLEOTIDE SEQUENCE [LARGE SCALE GENOMIC DNA]</scope>
    <source>
        <strain>RS-1</strain>
    </source>
</reference>
<gene>
    <name evidence="1" type="primary">fmt</name>
    <name type="ordered locus">RoseRS_3920</name>
</gene>
<accession>A5V070</accession>
<keyword id="KW-0648">Protein biosynthesis</keyword>
<keyword id="KW-0808">Transferase</keyword>
<name>FMT_ROSS1</name>
<proteinExistence type="inferred from homology"/>